<accession>P76190</accession>
<accession>P78164</accession>
<reference key="1">
    <citation type="journal article" date="1996" name="DNA Res.">
        <title>A 570-kb DNA sequence of the Escherichia coli K-12 genome corresponding to the 28.0-40.1 min region on the linkage map.</title>
        <authorList>
            <person name="Aiba H."/>
            <person name="Baba T."/>
            <person name="Fujita K."/>
            <person name="Hayashi K."/>
            <person name="Inada T."/>
            <person name="Isono K."/>
            <person name="Itoh T."/>
            <person name="Kasai H."/>
            <person name="Kashimoto K."/>
            <person name="Kimura S."/>
            <person name="Kitakawa M."/>
            <person name="Kitagawa M."/>
            <person name="Makino K."/>
            <person name="Miki T."/>
            <person name="Mizobuchi K."/>
            <person name="Mori H."/>
            <person name="Mori T."/>
            <person name="Motomura K."/>
            <person name="Nakade S."/>
            <person name="Nakamura Y."/>
            <person name="Nashimoto H."/>
            <person name="Nishio Y."/>
            <person name="Oshima T."/>
            <person name="Saito N."/>
            <person name="Sampei G."/>
            <person name="Seki Y."/>
            <person name="Sivasundaram S."/>
            <person name="Tagami H."/>
            <person name="Takeda J."/>
            <person name="Takemoto K."/>
            <person name="Takeuchi Y."/>
            <person name="Wada C."/>
            <person name="Yamamoto Y."/>
            <person name="Horiuchi T."/>
        </authorList>
    </citation>
    <scope>NUCLEOTIDE SEQUENCE [LARGE SCALE GENOMIC DNA]</scope>
    <source>
        <strain>K12 / W3110 / ATCC 27325 / DSM 5911</strain>
    </source>
</reference>
<reference key="2">
    <citation type="journal article" date="1997" name="Science">
        <title>The complete genome sequence of Escherichia coli K-12.</title>
        <authorList>
            <person name="Blattner F.R."/>
            <person name="Plunkett G. III"/>
            <person name="Bloch C.A."/>
            <person name="Perna N.T."/>
            <person name="Burland V."/>
            <person name="Riley M."/>
            <person name="Collado-Vides J."/>
            <person name="Glasner J.D."/>
            <person name="Rode C.K."/>
            <person name="Mayhew G.F."/>
            <person name="Gregor J."/>
            <person name="Davis N.W."/>
            <person name="Kirkpatrick H.A."/>
            <person name="Goeden M.A."/>
            <person name="Rose D.J."/>
            <person name="Mau B."/>
            <person name="Shao Y."/>
        </authorList>
    </citation>
    <scope>NUCLEOTIDE SEQUENCE [LARGE SCALE GENOMIC DNA]</scope>
    <source>
        <strain>K12 / MG1655 / ATCC 47076</strain>
    </source>
</reference>
<reference key="3">
    <citation type="journal article" date="2006" name="Mol. Syst. Biol.">
        <title>Highly accurate genome sequences of Escherichia coli K-12 strains MG1655 and W3110.</title>
        <authorList>
            <person name="Hayashi K."/>
            <person name="Morooka N."/>
            <person name="Yamamoto Y."/>
            <person name="Fujita K."/>
            <person name="Isono K."/>
            <person name="Choi S."/>
            <person name="Ohtsubo E."/>
            <person name="Baba T."/>
            <person name="Wanner B.L."/>
            <person name="Mori H."/>
            <person name="Horiuchi T."/>
        </authorList>
    </citation>
    <scope>NUCLEOTIDE SEQUENCE [LARGE SCALE GENOMIC DNA]</scope>
    <source>
        <strain>K12 / W3110 / ATCC 27325 / DSM 5911</strain>
    </source>
</reference>
<reference key="4">
    <citation type="journal article" date="2012" name="Mol. Microbiol.">
        <title>Three redundant murein endopeptidases catalyse an essential cleavage step in peptidoglycan synthesis of Escherichia coli K12.</title>
        <authorList>
            <person name="Singh S.K."/>
            <person name="SaiSree L."/>
            <person name="Amrutha R.N."/>
            <person name="Reddy M."/>
        </authorList>
    </citation>
    <scope>FUNCTION AS A MUREIN DD-ENDOPEPTIDASE</scope>
    <scope>DISRUPTION PHENOTYPE</scope>
    <source>
        <strain>K12</strain>
    </source>
</reference>
<evidence type="ECO:0000255" key="1"/>
<evidence type="ECO:0000255" key="2">
    <source>
        <dbReference type="PROSITE-ProRule" id="PRU01284"/>
    </source>
</evidence>
<evidence type="ECO:0000256" key="3">
    <source>
        <dbReference type="SAM" id="MobiDB-lite"/>
    </source>
</evidence>
<evidence type="ECO:0000269" key="4">
    <source>
    </source>
</evidence>
<evidence type="ECO:0000305" key="5"/>
<gene>
    <name type="primary">mepH</name>
    <name type="synonym">ydhO</name>
    <name type="ordered locus">b1655</name>
    <name type="ordered locus">JW5270</name>
</gene>
<name>MEPH_ECOLI</name>
<comment type="function">
    <text evidence="4">A murein DD-endopeptidase with specificity for D-Ala-meso-diaminopimelic acid (mDAP) cross-links. Its role is probably to cleave D-Ala-mDAP cross-links to allow insertion of new glycans and thus cell wall expansion. Functionally redundant with MepM and MepH. Partially suppresses an mepS disruption mutant.</text>
</comment>
<comment type="pathway">
    <text>Cell wall biogenesis; cell wall polysaccharide biosynthesis.</text>
</comment>
<comment type="disruption phenotype">
    <text evidence="4">A triple mepS-mepH-mepM mutant is inviable, whereas a double mepS-mepM will grow on a nutrient-poor medium but not on a rich medium, suggesting the 3 endopeptidases are functionally redundant in vivo. Depletion experiments of the double or triple mutants lead to cell lysis, as well as significantly decreased incorporation of mDAP into peptidoglycan sacculi and increased amounts of the enzyme's substrate (Tetra-Tetra-anhydro muropeptide).</text>
</comment>
<comment type="similarity">
    <text evidence="2 5">Belongs to the peptidase C40 family.</text>
</comment>
<feature type="signal peptide" evidence="1">
    <location>
        <begin position="1"/>
        <end position="27"/>
    </location>
</feature>
<feature type="chain" id="PRO_0000019768" description="Murein DD-endopeptidase MepH">
    <location>
        <begin position="28"/>
        <end position="271"/>
    </location>
</feature>
<feature type="domain" description="NlpC/P60" evidence="2">
    <location>
        <begin position="138"/>
        <end position="265"/>
    </location>
</feature>
<feature type="region of interest" description="Disordered" evidence="3">
    <location>
        <begin position="27"/>
        <end position="102"/>
    </location>
</feature>
<feature type="compositionally biased region" description="Basic residues" evidence="3">
    <location>
        <begin position="55"/>
        <end position="64"/>
    </location>
</feature>
<feature type="compositionally biased region" description="Low complexity" evidence="3">
    <location>
        <begin position="65"/>
        <end position="86"/>
    </location>
</feature>
<feature type="active site" description="Nucleophile" evidence="2">
    <location>
        <position position="169"/>
    </location>
</feature>
<feature type="active site" description="Proton acceptor" evidence="2">
    <location>
        <position position="224"/>
    </location>
</feature>
<feature type="active site" evidence="2">
    <location>
        <position position="236"/>
    </location>
</feature>
<proteinExistence type="evidence at protein level"/>
<dbReference type="EC" id="3.4.-.-"/>
<dbReference type="EMBL" id="U00096">
    <property type="protein sequence ID" value="AAC74727.1"/>
    <property type="molecule type" value="Genomic_DNA"/>
</dbReference>
<dbReference type="EMBL" id="AP009048">
    <property type="protein sequence ID" value="BAA15421.2"/>
    <property type="molecule type" value="Genomic_DNA"/>
</dbReference>
<dbReference type="PIR" id="A64923">
    <property type="entry name" value="A64923"/>
</dbReference>
<dbReference type="RefSeq" id="NP_416172.1">
    <property type="nucleotide sequence ID" value="NC_000913.3"/>
</dbReference>
<dbReference type="RefSeq" id="WP_000101193.1">
    <property type="nucleotide sequence ID" value="NZ_STEB01000003.1"/>
</dbReference>
<dbReference type="SMR" id="P76190"/>
<dbReference type="BioGRID" id="4259398">
    <property type="interactions" value="232"/>
</dbReference>
<dbReference type="FunCoup" id="P76190">
    <property type="interactions" value="18"/>
</dbReference>
<dbReference type="STRING" id="511145.b1655"/>
<dbReference type="MEROPS" id="C40.013"/>
<dbReference type="PaxDb" id="511145-b1655"/>
<dbReference type="EnsemblBacteria" id="AAC74727">
    <property type="protein sequence ID" value="AAC74727"/>
    <property type="gene ID" value="b1655"/>
</dbReference>
<dbReference type="GeneID" id="93775809"/>
<dbReference type="GeneID" id="945210"/>
<dbReference type="KEGG" id="ecj:JW5270"/>
<dbReference type="KEGG" id="eco:b1655"/>
<dbReference type="KEGG" id="ecoc:C3026_09495"/>
<dbReference type="PATRIC" id="fig|511145.12.peg.1727"/>
<dbReference type="EchoBASE" id="EB3707"/>
<dbReference type="eggNOG" id="COG0791">
    <property type="taxonomic scope" value="Bacteria"/>
</dbReference>
<dbReference type="HOGENOM" id="CLU_016043_2_0_6"/>
<dbReference type="InParanoid" id="P76190"/>
<dbReference type="OMA" id="ILYWGSA"/>
<dbReference type="OrthoDB" id="9807055at2"/>
<dbReference type="PhylomeDB" id="P76190"/>
<dbReference type="BioCyc" id="EcoCyc:G6892-MONOMER"/>
<dbReference type="BioCyc" id="MetaCyc:G6892-MONOMER"/>
<dbReference type="UniPathway" id="UPA00963"/>
<dbReference type="PRO" id="PR:P76190"/>
<dbReference type="Proteomes" id="UP000000625">
    <property type="component" value="Chromosome"/>
</dbReference>
<dbReference type="GO" id="GO:0008234">
    <property type="term" value="F:cysteine-type peptidase activity"/>
    <property type="evidence" value="ECO:0007669"/>
    <property type="project" value="UniProtKB-KW"/>
</dbReference>
<dbReference type="GO" id="GO:0004175">
    <property type="term" value="F:endopeptidase activity"/>
    <property type="evidence" value="ECO:0000314"/>
    <property type="project" value="EcoCyc"/>
</dbReference>
<dbReference type="GO" id="GO:0045227">
    <property type="term" value="P:capsule polysaccharide biosynthetic process"/>
    <property type="evidence" value="ECO:0007669"/>
    <property type="project" value="UniProtKB-UniPathway"/>
</dbReference>
<dbReference type="GO" id="GO:0071555">
    <property type="term" value="P:cell wall organization"/>
    <property type="evidence" value="ECO:0007669"/>
    <property type="project" value="UniProtKB-KW"/>
</dbReference>
<dbReference type="GO" id="GO:0000270">
    <property type="term" value="P:peptidoglycan metabolic process"/>
    <property type="evidence" value="ECO:0000314"/>
    <property type="project" value="EcoCyc"/>
</dbReference>
<dbReference type="GO" id="GO:0006508">
    <property type="term" value="P:proteolysis"/>
    <property type="evidence" value="ECO:0007669"/>
    <property type="project" value="UniProtKB-KW"/>
</dbReference>
<dbReference type="FunFam" id="3.90.1720.10:FF:000007">
    <property type="entry name" value="Predicted lipoprotein"/>
    <property type="match status" value="1"/>
</dbReference>
<dbReference type="Gene3D" id="3.90.1720.10">
    <property type="entry name" value="endopeptidase domain like (from Nostoc punctiforme)"/>
    <property type="match status" value="1"/>
</dbReference>
<dbReference type="InterPro" id="IPR000064">
    <property type="entry name" value="NLP_P60_dom"/>
</dbReference>
<dbReference type="InterPro" id="IPR038765">
    <property type="entry name" value="Papain-like_cys_pep_sf"/>
</dbReference>
<dbReference type="InterPro" id="IPR051202">
    <property type="entry name" value="Peptidase_C40"/>
</dbReference>
<dbReference type="PANTHER" id="PTHR47053">
    <property type="entry name" value="MUREIN DD-ENDOPEPTIDASE MEPH-RELATED"/>
    <property type="match status" value="1"/>
</dbReference>
<dbReference type="PANTHER" id="PTHR47053:SF1">
    <property type="entry name" value="MUREIN DD-ENDOPEPTIDASE MEPH-RELATED"/>
    <property type="match status" value="1"/>
</dbReference>
<dbReference type="Pfam" id="PF00877">
    <property type="entry name" value="NLPC_P60"/>
    <property type="match status" value="1"/>
</dbReference>
<dbReference type="SUPFAM" id="SSF54001">
    <property type="entry name" value="Cysteine proteinases"/>
    <property type="match status" value="1"/>
</dbReference>
<dbReference type="PROSITE" id="PS51935">
    <property type="entry name" value="NLPC_P60"/>
    <property type="match status" value="1"/>
</dbReference>
<organism>
    <name type="scientific">Escherichia coli (strain K12)</name>
    <dbReference type="NCBI Taxonomy" id="83333"/>
    <lineage>
        <taxon>Bacteria</taxon>
        <taxon>Pseudomonadati</taxon>
        <taxon>Pseudomonadota</taxon>
        <taxon>Gammaproteobacteria</taxon>
        <taxon>Enterobacterales</taxon>
        <taxon>Enterobacteriaceae</taxon>
        <taxon>Escherichia</taxon>
    </lineage>
</organism>
<protein>
    <recommendedName>
        <fullName>Murein DD-endopeptidase MepH</fullName>
        <ecNumber>3.4.-.-</ecNumber>
    </recommendedName>
    <alternativeName>
        <fullName>Murein hydrolase MepH</fullName>
    </alternativeName>
</protein>
<sequence>MARINRISITLCALLFTTLPLTPMAHASKQARESSATTHITKKADKKKSTATTKKTQKTAKKAASKSTTKSKTASSVKKSSITASKNAKTRSKHAVNKTASASFTEKCTKRKGYKSHCVKVKNAASGTLADAHKAKVQKATKVAMNKLMQQIGKPYRWGGSSPRTGFDCSGLVYYAYKDLVKIRIPRTANEMYHLRDAAPIERSELKNGDLVFFRTQGRGTADHVGVYVGNGKFIQSPRTGQEIQITSLSEDYWQRHYVGARRVMTPKTLR</sequence>
<keyword id="KW-0961">Cell wall biogenesis/degradation</keyword>
<keyword id="KW-0378">Hydrolase</keyword>
<keyword id="KW-0645">Protease</keyword>
<keyword id="KW-1185">Reference proteome</keyword>
<keyword id="KW-0732">Signal</keyword>
<keyword id="KW-0788">Thiol protease</keyword>